<dbReference type="EMBL" id="M13021">
    <property type="protein sequence ID" value="AAA29485.1"/>
    <property type="status" value="ALT_INIT"/>
    <property type="molecule type" value="Genomic_DNA"/>
</dbReference>
<dbReference type="EMBL" id="S56699">
    <property type="protein sequence ID" value="AAB25852.1"/>
    <property type="molecule type" value="Genomic_DNA"/>
</dbReference>
<dbReference type="PIR" id="A23535">
    <property type="entry name" value="A23535"/>
</dbReference>
<dbReference type="SMR" id="P13824"/>
<dbReference type="VEuPathDB" id="PlasmoDB:PF3D7_1236100"/>
<dbReference type="VEuPathDB" id="PlasmoDB:Pf7G8-2_000385600"/>
<dbReference type="VEuPathDB" id="PlasmoDB:Pf7G8_120041400"/>
<dbReference type="VEuPathDB" id="PlasmoDB:PfCD01_120040800"/>
<dbReference type="VEuPathDB" id="PlasmoDB:PfDd2_120040900"/>
<dbReference type="VEuPathDB" id="PlasmoDB:PfGA01_120040600"/>
<dbReference type="VEuPathDB" id="PlasmoDB:PfGB4_120041300"/>
<dbReference type="VEuPathDB" id="PlasmoDB:PfGN01_120041900"/>
<dbReference type="VEuPathDB" id="PlasmoDB:PfHB3_120040700"/>
<dbReference type="VEuPathDB" id="PlasmoDB:PfIT_120041000"/>
<dbReference type="VEuPathDB" id="PlasmoDB:PfKE01_120040900"/>
<dbReference type="VEuPathDB" id="PlasmoDB:PfKH01_120042300"/>
<dbReference type="VEuPathDB" id="PlasmoDB:PfKH02_120041000"/>
<dbReference type="VEuPathDB" id="PlasmoDB:PfML01_120041400"/>
<dbReference type="VEuPathDB" id="PlasmoDB:PfNF135_120041100"/>
<dbReference type="VEuPathDB" id="PlasmoDB:PfNF166_120042500"/>
<dbReference type="VEuPathDB" id="PlasmoDB:PfNF54_120040600"/>
<dbReference type="VEuPathDB" id="PlasmoDB:PfSD01_120040800"/>
<dbReference type="VEuPathDB" id="PlasmoDB:PfSN01_120041400"/>
<dbReference type="VEuPathDB" id="PlasmoDB:PfTG01_120040800"/>
<dbReference type="GO" id="GO:0003723">
    <property type="term" value="F:RNA binding"/>
    <property type="evidence" value="ECO:0007669"/>
    <property type="project" value="UniProtKB-KW"/>
</dbReference>
<dbReference type="CDD" id="cd00590">
    <property type="entry name" value="RRM_SF"/>
    <property type="match status" value="1"/>
</dbReference>
<dbReference type="Gene3D" id="3.30.70.330">
    <property type="match status" value="2"/>
</dbReference>
<dbReference type="InterPro" id="IPR012677">
    <property type="entry name" value="Nucleotide-bd_a/b_plait_sf"/>
</dbReference>
<dbReference type="InterPro" id="IPR035979">
    <property type="entry name" value="RBD_domain_sf"/>
</dbReference>
<dbReference type="InterPro" id="IPR000504">
    <property type="entry name" value="RRM_dom"/>
</dbReference>
<dbReference type="Pfam" id="PF00076">
    <property type="entry name" value="RRM_1"/>
    <property type="match status" value="1"/>
</dbReference>
<dbReference type="SMART" id="SM00360">
    <property type="entry name" value="RRM"/>
    <property type="match status" value="2"/>
</dbReference>
<dbReference type="SUPFAM" id="SSF54928">
    <property type="entry name" value="RNA-binding domain, RBD"/>
    <property type="match status" value="1"/>
</dbReference>
<dbReference type="PROSITE" id="PS50102">
    <property type="entry name" value="RRM"/>
    <property type="match status" value="2"/>
</dbReference>
<name>ARP2_PLAFA</name>
<evidence type="ECO:0000255" key="1">
    <source>
        <dbReference type="PROSITE-ProRule" id="PRU00176"/>
    </source>
</evidence>
<evidence type="ECO:0000256" key="2">
    <source>
        <dbReference type="SAM" id="MobiDB-lite"/>
    </source>
</evidence>
<evidence type="ECO:0000305" key="3"/>
<feature type="chain" id="PRO_0000081486" description="Clustered-asparagine-rich protein">
    <location>
        <begin position="1"/>
        <end position="443"/>
    </location>
</feature>
<feature type="domain" description="RRM 1" evidence="1">
    <location>
        <begin position="16"/>
        <end position="106"/>
    </location>
</feature>
<feature type="domain" description="RRM 2" evidence="1">
    <location>
        <begin position="342"/>
        <end position="435"/>
    </location>
</feature>
<feature type="region of interest" description="Disordered" evidence="2">
    <location>
        <begin position="253"/>
        <end position="279"/>
    </location>
</feature>
<feature type="compositionally biased region" description="Low complexity" evidence="2">
    <location>
        <begin position="256"/>
        <end position="277"/>
    </location>
</feature>
<sequence length="443" mass="51176">MNNEIVNSTIDGVLNTKLHIQNIPPHITDVHLRSLLGNVGFIKDICYFNKSKKQMNNNNFANKKIYNTALVTFNTHEEALNVLKNIKNLIDTSGEERNIDAKFAVPNVSINNNNNNNNSNTFFQKNNMNNTNFSQGSTNYGSNYNSENFQGNNNMNNYNFYNNNSSNNNNNNQTNTQNNFMNRNMKNKNMNNNNNNNNSNNNMMMNMNFNNNQQMNNNPMLNQNNFMLNNNNNYNNNAKNVNDMYRDGEMSPNHLNNNNNNINNNNNNNNNNNNNNNVMFRQNNSHLAQMYQANDNSLEDVENVDGLSLWEMYKDKNNNIFYYNNLTKHANGINLFTQTNYSSITIMKKQNKMDLVEVTYLFSTYLVNGQTLIYSNISVVLVILYHQKFKETVLGRNSGFGFVSYDNVISAQHAIQFMNGYFVNNKYLKVQLKKGETVENTNS</sequence>
<protein>
    <recommendedName>
        <fullName>Clustered-asparagine-rich protein</fullName>
        <shortName>CARP</shortName>
    </recommendedName>
</protein>
<reference key="1">
    <citation type="journal article" date="1986" name="Proc. Natl. Acad. Sci. U.S.A.">
        <title>A Plasmodium falciparum antigen containing clusters of asparagine residues.</title>
        <authorList>
            <person name="Wahlgren M."/>
            <person name="Aaslund L."/>
            <person name="Franzen L."/>
            <person name="Sundvall M."/>
            <person name="Waahlin B."/>
            <person name="Berzins K."/>
            <person name="McNicol L.A."/>
            <person name="Bjoerkman A."/>
            <person name="Wigzell H."/>
            <person name="Perlmann P."/>
            <person name="Pettersson U."/>
        </authorList>
    </citation>
    <scope>NUCLEOTIDE SEQUENCE [GENOMIC DNA]</scope>
</reference>
<reference key="2">
    <citation type="journal article" date="1993" name="Exp. Parasitol.">
        <title>Plasmodium falciparum: the immune response in rabbits to the clustered asparagine-rich protein (CARP) after immunization in Freund's adjuvant or immunostimulating complexes (ISCOMs).</title>
        <authorList>
            <person name="Sjolander A."/>
            <person name="Stahl S."/>
            <person name="Lovgren K."/>
            <person name="Hansson M."/>
            <person name="Cavelier L."/>
            <person name="Walles A."/>
            <person name="Helmby H."/>
            <person name="Wahlin B."/>
            <person name="Morein B."/>
            <person name="Uhlen M."/>
            <person name="Berzins K."/>
            <person name="Perlmann P."/>
            <person name="Wahlgren M."/>
        </authorList>
    </citation>
    <scope>NUCLEOTIDE SEQUENCE [GENOMIC DNA] OF 1-17</scope>
</reference>
<organism>
    <name type="scientific">Plasmodium falciparum</name>
    <dbReference type="NCBI Taxonomy" id="5833"/>
    <lineage>
        <taxon>Eukaryota</taxon>
        <taxon>Sar</taxon>
        <taxon>Alveolata</taxon>
        <taxon>Apicomplexa</taxon>
        <taxon>Aconoidasida</taxon>
        <taxon>Haemosporida</taxon>
        <taxon>Plasmodiidae</taxon>
        <taxon>Plasmodium</taxon>
        <taxon>Plasmodium (Laverania)</taxon>
    </lineage>
</organism>
<accession>P13824</accession>
<accession>Q9TY66</accession>
<proteinExistence type="predicted"/>
<comment type="sequence caution" evidence="3">
    <conflict type="erroneous initiation">
        <sequence resource="EMBL-CDS" id="AAA29485"/>
    </conflict>
</comment>
<keyword id="KW-0461">Malaria</keyword>
<keyword id="KW-0677">Repeat</keyword>
<keyword id="KW-0694">RNA-binding</keyword>